<gene>
    <name evidence="1" type="primary">rpmI</name>
    <name type="ordered locus">lhv_1597</name>
</gene>
<dbReference type="EMBL" id="CP000517">
    <property type="protein sequence ID" value="ABX27519.1"/>
    <property type="molecule type" value="Genomic_DNA"/>
</dbReference>
<dbReference type="RefSeq" id="WP_003627120.1">
    <property type="nucleotide sequence ID" value="NC_010080.1"/>
</dbReference>
<dbReference type="SMR" id="A8YWD3"/>
<dbReference type="KEGG" id="lhe:lhv_1597"/>
<dbReference type="eggNOG" id="COG0291">
    <property type="taxonomic scope" value="Bacteria"/>
</dbReference>
<dbReference type="HOGENOM" id="CLU_169643_3_1_9"/>
<dbReference type="Proteomes" id="UP000000790">
    <property type="component" value="Chromosome"/>
</dbReference>
<dbReference type="GO" id="GO:0022625">
    <property type="term" value="C:cytosolic large ribosomal subunit"/>
    <property type="evidence" value="ECO:0007669"/>
    <property type="project" value="TreeGrafter"/>
</dbReference>
<dbReference type="GO" id="GO:0003735">
    <property type="term" value="F:structural constituent of ribosome"/>
    <property type="evidence" value="ECO:0007669"/>
    <property type="project" value="InterPro"/>
</dbReference>
<dbReference type="GO" id="GO:0006412">
    <property type="term" value="P:translation"/>
    <property type="evidence" value="ECO:0007669"/>
    <property type="project" value="UniProtKB-UniRule"/>
</dbReference>
<dbReference type="FunFam" id="4.10.410.60:FF:000001">
    <property type="entry name" value="50S ribosomal protein L35"/>
    <property type="match status" value="1"/>
</dbReference>
<dbReference type="Gene3D" id="4.10.410.60">
    <property type="match status" value="1"/>
</dbReference>
<dbReference type="HAMAP" id="MF_00514">
    <property type="entry name" value="Ribosomal_bL35"/>
    <property type="match status" value="1"/>
</dbReference>
<dbReference type="InterPro" id="IPR001706">
    <property type="entry name" value="Ribosomal_bL35"/>
</dbReference>
<dbReference type="InterPro" id="IPR021137">
    <property type="entry name" value="Ribosomal_bL35-like"/>
</dbReference>
<dbReference type="InterPro" id="IPR018265">
    <property type="entry name" value="Ribosomal_bL35_CS"/>
</dbReference>
<dbReference type="InterPro" id="IPR037229">
    <property type="entry name" value="Ribosomal_bL35_sf"/>
</dbReference>
<dbReference type="NCBIfam" id="TIGR00001">
    <property type="entry name" value="rpmI_bact"/>
    <property type="match status" value="1"/>
</dbReference>
<dbReference type="PANTHER" id="PTHR33343">
    <property type="entry name" value="54S RIBOSOMAL PROTEIN BL35M"/>
    <property type="match status" value="1"/>
</dbReference>
<dbReference type="PANTHER" id="PTHR33343:SF1">
    <property type="entry name" value="LARGE RIBOSOMAL SUBUNIT PROTEIN BL35M"/>
    <property type="match status" value="1"/>
</dbReference>
<dbReference type="Pfam" id="PF01632">
    <property type="entry name" value="Ribosomal_L35p"/>
    <property type="match status" value="1"/>
</dbReference>
<dbReference type="PRINTS" id="PR00064">
    <property type="entry name" value="RIBOSOMALL35"/>
</dbReference>
<dbReference type="SUPFAM" id="SSF143034">
    <property type="entry name" value="L35p-like"/>
    <property type="match status" value="1"/>
</dbReference>
<dbReference type="PROSITE" id="PS00936">
    <property type="entry name" value="RIBOSOMAL_L35"/>
    <property type="match status" value="1"/>
</dbReference>
<proteinExistence type="inferred from homology"/>
<accession>A8YWD3</accession>
<sequence>MPKMKTHRASAKRFKRTANGGLKRHHAFTGHRFHGKTKKQRRHLRKAAMVSRSDIKRIKQMLAQMH</sequence>
<keyword id="KW-0687">Ribonucleoprotein</keyword>
<keyword id="KW-0689">Ribosomal protein</keyword>
<protein>
    <recommendedName>
        <fullName evidence="1">Large ribosomal subunit protein bL35</fullName>
    </recommendedName>
    <alternativeName>
        <fullName evidence="3">50S ribosomal protein L35</fullName>
    </alternativeName>
</protein>
<name>RL35_LACH4</name>
<evidence type="ECO:0000255" key="1">
    <source>
        <dbReference type="HAMAP-Rule" id="MF_00514"/>
    </source>
</evidence>
<evidence type="ECO:0000256" key="2">
    <source>
        <dbReference type="SAM" id="MobiDB-lite"/>
    </source>
</evidence>
<evidence type="ECO:0000305" key="3"/>
<organism>
    <name type="scientific">Lactobacillus helveticus (strain DPC 4571)</name>
    <dbReference type="NCBI Taxonomy" id="405566"/>
    <lineage>
        <taxon>Bacteria</taxon>
        <taxon>Bacillati</taxon>
        <taxon>Bacillota</taxon>
        <taxon>Bacilli</taxon>
        <taxon>Lactobacillales</taxon>
        <taxon>Lactobacillaceae</taxon>
        <taxon>Lactobacillus</taxon>
    </lineage>
</organism>
<comment type="similarity">
    <text evidence="1">Belongs to the bacterial ribosomal protein bL35 family.</text>
</comment>
<reference key="1">
    <citation type="journal article" date="2008" name="J. Bacteriol.">
        <title>Genome sequence of Lactobacillus helveticus: an organism distinguished by selective gene loss and IS element expansion.</title>
        <authorList>
            <person name="Callanan M."/>
            <person name="Kaleta P."/>
            <person name="O'Callaghan J."/>
            <person name="O'Sullivan O."/>
            <person name="Jordan K."/>
            <person name="McAuliffe O."/>
            <person name="Sangrador-Vegas A."/>
            <person name="Slattery L."/>
            <person name="Fitzgerald G.F."/>
            <person name="Beresford T."/>
            <person name="Ross R.P."/>
        </authorList>
    </citation>
    <scope>NUCLEOTIDE SEQUENCE [LARGE SCALE GENOMIC DNA]</scope>
    <source>
        <strain>DPC 4571</strain>
    </source>
</reference>
<feature type="chain" id="PRO_1000072478" description="Large ribosomal subunit protein bL35">
    <location>
        <begin position="1"/>
        <end position="66"/>
    </location>
</feature>
<feature type="region of interest" description="Disordered" evidence="2">
    <location>
        <begin position="1"/>
        <end position="23"/>
    </location>
</feature>